<protein>
    <recommendedName>
        <fullName evidence="1">Large ribosomal subunit protein uL16</fullName>
    </recommendedName>
    <alternativeName>
        <fullName evidence="2">50S ribosomal protein L16</fullName>
    </alternativeName>
</protein>
<gene>
    <name evidence="1" type="primary">rplP</name>
    <name evidence="1" type="synonym">rpl16</name>
    <name type="ordered locus">UU238</name>
</gene>
<reference key="1">
    <citation type="journal article" date="2000" name="Nature">
        <title>The complete sequence of the mucosal pathogen Ureaplasma urealyticum.</title>
        <authorList>
            <person name="Glass J.I."/>
            <person name="Lefkowitz E.J."/>
            <person name="Glass J.S."/>
            <person name="Heiner C.R."/>
            <person name="Chen E.Y."/>
            <person name="Cassell G.H."/>
        </authorList>
    </citation>
    <scope>NUCLEOTIDE SEQUENCE [LARGE SCALE GENOMIC DNA]</scope>
    <source>
        <strain>ATCC 700970</strain>
    </source>
</reference>
<proteinExistence type="inferred from homology"/>
<feature type="chain" id="PRO_0000062243" description="Large ribosomal subunit protein uL16">
    <location>
        <begin position="1"/>
        <end position="138"/>
    </location>
</feature>
<dbReference type="EMBL" id="AF222894">
    <property type="protein sequence ID" value="AAF30647.1"/>
    <property type="molecule type" value="Genomic_DNA"/>
</dbReference>
<dbReference type="RefSeq" id="WP_006688879.1">
    <property type="nucleotide sequence ID" value="NC_002162.1"/>
</dbReference>
<dbReference type="SMR" id="Q9PQQ3"/>
<dbReference type="STRING" id="273119.UU238"/>
<dbReference type="EnsemblBacteria" id="AAF30647">
    <property type="protein sequence ID" value="AAF30647"/>
    <property type="gene ID" value="UU238"/>
</dbReference>
<dbReference type="GeneID" id="29672668"/>
<dbReference type="KEGG" id="uur:UU238"/>
<dbReference type="eggNOG" id="COG0197">
    <property type="taxonomic scope" value="Bacteria"/>
</dbReference>
<dbReference type="HOGENOM" id="CLU_078858_2_1_14"/>
<dbReference type="OrthoDB" id="9802589at2"/>
<dbReference type="Proteomes" id="UP000000423">
    <property type="component" value="Chromosome"/>
</dbReference>
<dbReference type="GO" id="GO:0022625">
    <property type="term" value="C:cytosolic large ribosomal subunit"/>
    <property type="evidence" value="ECO:0007669"/>
    <property type="project" value="TreeGrafter"/>
</dbReference>
<dbReference type="GO" id="GO:0019843">
    <property type="term" value="F:rRNA binding"/>
    <property type="evidence" value="ECO:0007669"/>
    <property type="project" value="UniProtKB-UniRule"/>
</dbReference>
<dbReference type="GO" id="GO:0003735">
    <property type="term" value="F:structural constituent of ribosome"/>
    <property type="evidence" value="ECO:0007669"/>
    <property type="project" value="InterPro"/>
</dbReference>
<dbReference type="GO" id="GO:0000049">
    <property type="term" value="F:tRNA binding"/>
    <property type="evidence" value="ECO:0007669"/>
    <property type="project" value="UniProtKB-KW"/>
</dbReference>
<dbReference type="GO" id="GO:0006412">
    <property type="term" value="P:translation"/>
    <property type="evidence" value="ECO:0007669"/>
    <property type="project" value="UniProtKB-UniRule"/>
</dbReference>
<dbReference type="CDD" id="cd01433">
    <property type="entry name" value="Ribosomal_L16_L10e"/>
    <property type="match status" value="1"/>
</dbReference>
<dbReference type="FunFam" id="3.90.1170.10:FF:000001">
    <property type="entry name" value="50S ribosomal protein L16"/>
    <property type="match status" value="1"/>
</dbReference>
<dbReference type="Gene3D" id="3.90.1170.10">
    <property type="entry name" value="Ribosomal protein L10e/L16"/>
    <property type="match status" value="1"/>
</dbReference>
<dbReference type="HAMAP" id="MF_01342">
    <property type="entry name" value="Ribosomal_uL16"/>
    <property type="match status" value="1"/>
</dbReference>
<dbReference type="InterPro" id="IPR047873">
    <property type="entry name" value="Ribosomal_uL16"/>
</dbReference>
<dbReference type="InterPro" id="IPR000114">
    <property type="entry name" value="Ribosomal_uL16_bact-type"/>
</dbReference>
<dbReference type="InterPro" id="IPR020798">
    <property type="entry name" value="Ribosomal_uL16_CS"/>
</dbReference>
<dbReference type="InterPro" id="IPR016180">
    <property type="entry name" value="Ribosomal_uL16_dom"/>
</dbReference>
<dbReference type="InterPro" id="IPR036920">
    <property type="entry name" value="Ribosomal_uL16_sf"/>
</dbReference>
<dbReference type="NCBIfam" id="TIGR01164">
    <property type="entry name" value="rplP_bact"/>
    <property type="match status" value="1"/>
</dbReference>
<dbReference type="PANTHER" id="PTHR12220">
    <property type="entry name" value="50S/60S RIBOSOMAL PROTEIN L16"/>
    <property type="match status" value="1"/>
</dbReference>
<dbReference type="PANTHER" id="PTHR12220:SF13">
    <property type="entry name" value="LARGE RIBOSOMAL SUBUNIT PROTEIN UL16M"/>
    <property type="match status" value="1"/>
</dbReference>
<dbReference type="Pfam" id="PF00252">
    <property type="entry name" value="Ribosomal_L16"/>
    <property type="match status" value="1"/>
</dbReference>
<dbReference type="PRINTS" id="PR00060">
    <property type="entry name" value="RIBOSOMALL16"/>
</dbReference>
<dbReference type="SUPFAM" id="SSF54686">
    <property type="entry name" value="Ribosomal protein L16p/L10e"/>
    <property type="match status" value="1"/>
</dbReference>
<dbReference type="PROSITE" id="PS00701">
    <property type="entry name" value="RIBOSOMAL_L16_2"/>
    <property type="match status" value="1"/>
</dbReference>
<sequence length="138" mass="15422">MLQPKRTKFRKPHKVSYEGKAKGNKQVDFGEFGLMALEGAWIDARQIESARIAISKRLLKTGKMWIRIFPHMSLTKKPLEVRMGSGKGSPEKWVAVVKAGTVMFEIANVSEELMCEALRAAGNKLPIKVKIVKKGEAN</sequence>
<keyword id="KW-1185">Reference proteome</keyword>
<keyword id="KW-0687">Ribonucleoprotein</keyword>
<keyword id="KW-0689">Ribosomal protein</keyword>
<keyword id="KW-0694">RNA-binding</keyword>
<keyword id="KW-0699">rRNA-binding</keyword>
<keyword id="KW-0820">tRNA-binding</keyword>
<accession>Q9PQQ3</accession>
<comment type="function">
    <text evidence="1">Binds 23S rRNA and is also seen to make contacts with the A and possibly P site tRNAs.</text>
</comment>
<comment type="subunit">
    <text evidence="1">Part of the 50S ribosomal subunit.</text>
</comment>
<comment type="similarity">
    <text evidence="1">Belongs to the universal ribosomal protein uL16 family.</text>
</comment>
<organism>
    <name type="scientific">Ureaplasma parvum serovar 3 (strain ATCC 700970)</name>
    <dbReference type="NCBI Taxonomy" id="273119"/>
    <lineage>
        <taxon>Bacteria</taxon>
        <taxon>Bacillati</taxon>
        <taxon>Mycoplasmatota</taxon>
        <taxon>Mycoplasmoidales</taxon>
        <taxon>Mycoplasmoidaceae</taxon>
        <taxon>Ureaplasma</taxon>
    </lineage>
</organism>
<name>RL16_UREPA</name>
<evidence type="ECO:0000255" key="1">
    <source>
        <dbReference type="HAMAP-Rule" id="MF_01342"/>
    </source>
</evidence>
<evidence type="ECO:0000305" key="2"/>